<comment type="cofactor">
    <cofactor evidence="2">
        <name>Zn(2+)</name>
        <dbReference type="ChEBI" id="CHEBI:29105"/>
    </cofactor>
    <text evidence="2">Binds 1 zinc ion per subunit.</text>
</comment>
<comment type="similarity">
    <text evidence="2">Belongs to the universal ribosomal protein uS14 family.</text>
</comment>
<dbReference type="EMBL" id="AY846831">
    <property type="protein sequence ID" value="AAW50992.1"/>
    <property type="molecule type" value="mRNA"/>
</dbReference>
<dbReference type="PDB" id="4V3P">
    <property type="method" value="EM"/>
    <property type="resolution" value="34.00 A"/>
    <property type="chains" value="SN=9-56"/>
</dbReference>
<dbReference type="PDB" id="4V7E">
    <property type="method" value="EM"/>
    <property type="resolution" value="5.50 A"/>
    <property type="chains" value="Bd=1-56"/>
</dbReference>
<dbReference type="PDB" id="8IP8">
    <property type="method" value="EM"/>
    <property type="resolution" value="2.90 A"/>
    <property type="chains" value="wa=1-56"/>
</dbReference>
<dbReference type="PDB" id="8IP9">
    <property type="method" value="EM"/>
    <property type="resolution" value="3.00 A"/>
    <property type="chains" value="wa=1-56"/>
</dbReference>
<dbReference type="PDB" id="8IPA">
    <property type="method" value="EM"/>
    <property type="resolution" value="3.40 A"/>
    <property type="chains" value="wa=1-56"/>
</dbReference>
<dbReference type="PDB" id="8IPB">
    <property type="method" value="EM"/>
    <property type="resolution" value="3.40 A"/>
    <property type="chains" value="wa=1-56"/>
</dbReference>
<dbReference type="PDB" id="8R57">
    <property type="method" value="EM"/>
    <property type="resolution" value="2.55 A"/>
    <property type="chains" value="d=1-56"/>
</dbReference>
<dbReference type="PDBsum" id="4V3P"/>
<dbReference type="PDBsum" id="4V7E"/>
<dbReference type="PDBsum" id="8IP8"/>
<dbReference type="PDBsum" id="8IP9"/>
<dbReference type="PDBsum" id="8IPA"/>
<dbReference type="PDBsum" id="8IPB"/>
<dbReference type="PDBsum" id="8R57"/>
<dbReference type="EMDB" id="EMD-18903"/>
<dbReference type="SMR" id="Q5I7K3"/>
<dbReference type="STRING" id="4565.Q5I7K3"/>
<dbReference type="PaxDb" id="4565-Traes_5BL_3608AAB59.1"/>
<dbReference type="eggNOG" id="KOG3506">
    <property type="taxonomic scope" value="Eukaryota"/>
</dbReference>
<dbReference type="Proteomes" id="UP000019116">
    <property type="component" value="Unplaced"/>
</dbReference>
<dbReference type="ExpressionAtlas" id="Q5I7K3">
    <property type="expression patterns" value="baseline"/>
</dbReference>
<dbReference type="GO" id="GO:0022627">
    <property type="term" value="C:cytosolic small ribosomal subunit"/>
    <property type="evidence" value="ECO:0000318"/>
    <property type="project" value="GO_Central"/>
</dbReference>
<dbReference type="GO" id="GO:0003735">
    <property type="term" value="F:structural constituent of ribosome"/>
    <property type="evidence" value="ECO:0000318"/>
    <property type="project" value="GO_Central"/>
</dbReference>
<dbReference type="GO" id="GO:0008270">
    <property type="term" value="F:zinc ion binding"/>
    <property type="evidence" value="ECO:0000318"/>
    <property type="project" value="GO_Central"/>
</dbReference>
<dbReference type="GO" id="GO:0002181">
    <property type="term" value="P:cytoplasmic translation"/>
    <property type="evidence" value="ECO:0000318"/>
    <property type="project" value="GO_Central"/>
</dbReference>
<dbReference type="FunFam" id="4.10.830.10:FF:000002">
    <property type="entry name" value="40S ribosomal protein S29"/>
    <property type="match status" value="1"/>
</dbReference>
<dbReference type="Gene3D" id="4.10.830.10">
    <property type="entry name" value="30s Ribosomal Protein S14, Chain N"/>
    <property type="match status" value="1"/>
</dbReference>
<dbReference type="InterPro" id="IPR001209">
    <property type="entry name" value="Ribosomal_uS14"/>
</dbReference>
<dbReference type="InterPro" id="IPR039744">
    <property type="entry name" value="RIbosomal_uS14_euk_arc"/>
</dbReference>
<dbReference type="InterPro" id="IPR043140">
    <property type="entry name" value="Ribosomal_uS14_sf"/>
</dbReference>
<dbReference type="NCBIfam" id="NF004424">
    <property type="entry name" value="PRK05766.1"/>
    <property type="match status" value="1"/>
</dbReference>
<dbReference type="PANTHER" id="PTHR12010">
    <property type="entry name" value="40S RIBOSOMAL PROTEIN S29"/>
    <property type="match status" value="1"/>
</dbReference>
<dbReference type="PANTHER" id="PTHR12010:SF2">
    <property type="entry name" value="40S RIBOSOMAL PROTEIN S29"/>
    <property type="match status" value="1"/>
</dbReference>
<dbReference type="Pfam" id="PF00253">
    <property type="entry name" value="Ribosomal_S14"/>
    <property type="match status" value="1"/>
</dbReference>
<evidence type="ECO:0000255" key="1"/>
<evidence type="ECO:0000305" key="2"/>
<evidence type="ECO:0007829" key="3">
    <source>
        <dbReference type="PDB" id="8R57"/>
    </source>
</evidence>
<name>RS29_WHEAT</name>
<gene>
    <name type="primary">RPS29</name>
</gene>
<organism>
    <name type="scientific">Triticum aestivum</name>
    <name type="common">Wheat</name>
    <dbReference type="NCBI Taxonomy" id="4565"/>
    <lineage>
        <taxon>Eukaryota</taxon>
        <taxon>Viridiplantae</taxon>
        <taxon>Streptophyta</taxon>
        <taxon>Embryophyta</taxon>
        <taxon>Tracheophyta</taxon>
        <taxon>Spermatophyta</taxon>
        <taxon>Magnoliopsida</taxon>
        <taxon>Liliopsida</taxon>
        <taxon>Poales</taxon>
        <taxon>Poaceae</taxon>
        <taxon>BOP clade</taxon>
        <taxon>Pooideae</taxon>
        <taxon>Triticodae</taxon>
        <taxon>Triticeae</taxon>
        <taxon>Triticinae</taxon>
        <taxon>Triticum</taxon>
    </lineage>
</organism>
<keyword id="KW-0002">3D-structure</keyword>
<keyword id="KW-0479">Metal-binding</keyword>
<keyword id="KW-1185">Reference proteome</keyword>
<keyword id="KW-0687">Ribonucleoprotein</keyword>
<keyword id="KW-0689">Ribosomal protein</keyword>
<keyword id="KW-0862">Zinc</keyword>
<reference key="1">
    <citation type="journal article" date="2006" name="Plant Sci.">
        <title>Isolation and characterization of 15 genes encoding ribosomal proteins in wheat (Triticum aestivum L.).</title>
        <authorList>
            <person name="Yao Y.Y."/>
            <person name="Ni Z.F."/>
            <person name="Du J."/>
            <person name="Wang X."/>
            <person name="Wu H."/>
            <person name="Sun Q.X."/>
        </authorList>
        <dbReference type="AGRICOLA" id="IND43813201"/>
    </citation>
    <scope>NUCLEOTIDE SEQUENCE [MRNA]</scope>
</reference>
<protein>
    <recommendedName>
        <fullName evidence="2">Small ribosomal subunit protein uS14</fullName>
    </recommendedName>
    <alternativeName>
        <fullName>40S ribosomal protein S29</fullName>
    </alternativeName>
</protein>
<proteinExistence type="evidence at protein level"/>
<accession>Q5I7K3</accession>
<feature type="chain" id="PRO_0000268809" description="Small ribosomal subunit protein uS14">
    <location>
        <begin position="1"/>
        <end position="56"/>
    </location>
</feature>
<feature type="binding site" evidence="1">
    <location>
        <position position="21"/>
    </location>
    <ligand>
        <name>Zn(2+)</name>
        <dbReference type="ChEBI" id="CHEBI:29105"/>
    </ligand>
</feature>
<feature type="binding site" evidence="1">
    <location>
        <position position="24"/>
    </location>
    <ligand>
        <name>Zn(2+)</name>
        <dbReference type="ChEBI" id="CHEBI:29105"/>
    </ligand>
</feature>
<feature type="binding site" evidence="1">
    <location>
        <position position="39"/>
    </location>
    <ligand>
        <name>Zn(2+)</name>
        <dbReference type="ChEBI" id="CHEBI:29105"/>
    </ligand>
</feature>
<feature type="binding site" evidence="1">
    <location>
        <position position="42"/>
    </location>
    <ligand>
        <name>Zn(2+)</name>
        <dbReference type="ChEBI" id="CHEBI:29105"/>
    </ligand>
</feature>
<feature type="strand" evidence="3">
    <location>
        <begin position="6"/>
        <end position="8"/>
    </location>
</feature>
<feature type="strand" evidence="3">
    <location>
        <begin position="13"/>
        <end position="15"/>
    </location>
</feature>
<feature type="helix" evidence="3">
    <location>
        <begin position="16"/>
        <end position="18"/>
    </location>
</feature>
<feature type="turn" evidence="3">
    <location>
        <begin position="22"/>
        <end position="24"/>
    </location>
</feature>
<feature type="strand" evidence="3">
    <location>
        <begin position="28"/>
        <end position="31"/>
    </location>
</feature>
<feature type="helix" evidence="3">
    <location>
        <begin position="33"/>
        <end position="35"/>
    </location>
</feature>
<feature type="helix" evidence="3">
    <location>
        <begin position="40"/>
        <end position="50"/>
    </location>
</feature>
<feature type="strand" evidence="3">
    <location>
        <begin position="53"/>
        <end position="56"/>
    </location>
</feature>
<sequence>MGHSNVWNSHPKNYGAGSRVCRVCGNSHGLIRKYGLMCCRQCFRSDAKDIGFIKYR</sequence>